<keyword id="KW-0027">Amidation</keyword>
<keyword id="KW-0165">Cleavage on pair of basic residues</keyword>
<keyword id="KW-0903">Direct protein sequencing</keyword>
<keyword id="KW-1015">Disulfide bond</keyword>
<keyword id="KW-0301">Gamma-carboxyglutamic acid</keyword>
<keyword id="KW-0964">Secreted</keyword>
<keyword id="KW-0732">Signal</keyword>
<keyword id="KW-0800">Toxin</keyword>
<organism>
    <name type="scientific">Conus textile</name>
    <name type="common">Cloth-of-gold cone</name>
    <dbReference type="NCBI Taxonomy" id="6494"/>
    <lineage>
        <taxon>Eukaryota</taxon>
        <taxon>Metazoa</taxon>
        <taxon>Spiralia</taxon>
        <taxon>Lophotrochozoa</taxon>
        <taxon>Mollusca</taxon>
        <taxon>Gastropoda</taxon>
        <taxon>Caenogastropoda</taxon>
        <taxon>Neogastropoda</taxon>
        <taxon>Conoidea</taxon>
        <taxon>Conidae</taxon>
        <taxon>Conus</taxon>
        <taxon>Cylinder</taxon>
    </lineage>
</organism>
<sequence>MVRVTSVGCFLLVIVSLNLVVLTNACIPEGSSCSSSGSCCHKSCCRWTCNQPCLIPGKRAKLLEFFRQR</sequence>
<comment type="subcellular location">
    <subcellularLocation>
        <location>Secreted</location>
    </subcellularLocation>
</comment>
<comment type="tissue specificity">
    <text>Expressed by the venom duct.</text>
</comment>
<comment type="domain">
    <text>The cysteine framework is XI (C-C-CC-CC-C-C).</text>
</comment>
<comment type="PTM">
    <text>Contains 4 disulfide bonds.</text>
</comment>
<comment type="mass spectrometry"/>
<comment type="similarity">
    <text evidence="4">Belongs to the conotoxin I2 superfamily.</text>
</comment>
<reference key="1">
    <citation type="journal article" date="2005" name="Biochemistry">
        <title>Precursors of novel Gla-containing conotoxins contain a carboxy-terminal recognition site that directs gamma-carboxylation.</title>
        <authorList>
            <person name="Brown M.A."/>
            <person name="Begley G.S."/>
            <person name="Czerwiec E."/>
            <person name="Stenberg L.M."/>
            <person name="Jacobs M."/>
            <person name="Kalume D.E."/>
            <person name="Roepstorff P."/>
            <person name="Stenflo J."/>
            <person name="Furie B.C."/>
            <person name="Furie B."/>
        </authorList>
    </citation>
    <scope>NUCLEOTIDE SEQUENCE [MRNA]</scope>
    <scope>PROTEIN SEQUENCE OF 26-56</scope>
    <scope>GAMMA-CARBOXYGLUTAMATION AT GLU-29</scope>
    <scope>AMIDATION AT PRO-56</scope>
    <scope>MASS SPECTROMETRY</scope>
    <source>
        <tissue>Venom</tissue>
        <tissue>Venom duct</tissue>
    </source>
</reference>
<name>I2B_CONTE</name>
<evidence type="ECO:0000250" key="1">
    <source>
        <dbReference type="UniProtKB" id="Q7Z094"/>
    </source>
</evidence>
<evidence type="ECO:0000255" key="2"/>
<evidence type="ECO:0000269" key="3">
    <source>
    </source>
</evidence>
<evidence type="ECO:0000305" key="4"/>
<dbReference type="EMBL" id="AY856070">
    <property type="protein sequence ID" value="AAW50950.1"/>
    <property type="molecule type" value="mRNA"/>
</dbReference>
<dbReference type="SMR" id="Q5I4E5"/>
<dbReference type="ConoServer" id="1057">
    <property type="toxin name" value="TxXI precursor"/>
</dbReference>
<dbReference type="GO" id="GO:0005576">
    <property type="term" value="C:extracellular region"/>
    <property type="evidence" value="ECO:0007669"/>
    <property type="project" value="UniProtKB-SubCell"/>
</dbReference>
<dbReference type="GO" id="GO:0090729">
    <property type="term" value="F:toxin activity"/>
    <property type="evidence" value="ECO:0007669"/>
    <property type="project" value="UniProtKB-KW"/>
</dbReference>
<dbReference type="InterPro" id="IPR013141">
    <property type="entry name" value="Conotoxin-I_CS"/>
</dbReference>
<dbReference type="InterPro" id="IPR020242">
    <property type="entry name" value="Conotoxin_I2"/>
</dbReference>
<dbReference type="Pfam" id="PF17557">
    <property type="entry name" value="Conotoxin_I2"/>
    <property type="match status" value="1"/>
</dbReference>
<dbReference type="PROSITE" id="PS60019">
    <property type="entry name" value="I_CONOTOXIN"/>
    <property type="match status" value="1"/>
</dbReference>
<proteinExistence type="evidence at protein level"/>
<feature type="signal peptide" evidence="2">
    <location>
        <begin position="1"/>
        <end position="25"/>
    </location>
</feature>
<feature type="chain" id="PRO_0000262449" description="Conotoxin Gla-TxXI">
    <location>
        <begin position="26"/>
        <end position="56"/>
    </location>
</feature>
<feature type="propeptide" id="PRO_0000262450">
    <location>
        <begin position="60"/>
        <end position="69"/>
    </location>
</feature>
<feature type="modified residue" description="4-carboxyglutamate" evidence="3">
    <location>
        <position position="29"/>
    </location>
</feature>
<feature type="modified residue" description="Proline amide" evidence="3">
    <location>
        <position position="56"/>
    </location>
</feature>
<feature type="disulfide bond" evidence="1">
    <location>
        <begin position="26"/>
        <end position="40"/>
    </location>
</feature>
<feature type="disulfide bond" evidence="1">
    <location>
        <begin position="33"/>
        <end position="45"/>
    </location>
</feature>
<feature type="disulfide bond" evidence="1">
    <location>
        <begin position="39"/>
        <end position="49"/>
    </location>
</feature>
<feature type="disulfide bond" evidence="1">
    <location>
        <begin position="44"/>
        <end position="53"/>
    </location>
</feature>
<protein>
    <recommendedName>
        <fullName>Conotoxin Gla-TxXI</fullName>
    </recommendedName>
</protein>
<accession>Q5I4E5</accession>